<gene>
    <name type="primary">ugd</name>
    <name type="synonym">pmrE</name>
    <name type="synonym">udg</name>
    <name type="synonym">yefA</name>
    <name type="ordered locus">b2028</name>
    <name type="ordered locus">JW2010</name>
</gene>
<dbReference type="EC" id="1.1.1.22" evidence="2"/>
<dbReference type="EMBL" id="U00096">
    <property type="protein sequence ID" value="AAC75089.1"/>
    <property type="molecule type" value="Genomic_DNA"/>
</dbReference>
<dbReference type="EMBL" id="AP009048">
    <property type="protein sequence ID" value="BAA15860.2"/>
    <property type="molecule type" value="Genomic_DNA"/>
</dbReference>
<dbReference type="PIR" id="C64968">
    <property type="entry name" value="C64968"/>
</dbReference>
<dbReference type="RefSeq" id="NP_416532.1">
    <property type="nucleotide sequence ID" value="NC_000913.3"/>
</dbReference>
<dbReference type="RefSeq" id="WP_000704857.1">
    <property type="nucleotide sequence ID" value="NZ_LN832404.1"/>
</dbReference>
<dbReference type="SMR" id="P76373"/>
<dbReference type="BioGRID" id="4261356">
    <property type="interactions" value="258"/>
</dbReference>
<dbReference type="BioGRID" id="850918">
    <property type="interactions" value="1"/>
</dbReference>
<dbReference type="FunCoup" id="P76373">
    <property type="interactions" value="453"/>
</dbReference>
<dbReference type="IntAct" id="P76373">
    <property type="interactions" value="4"/>
</dbReference>
<dbReference type="STRING" id="511145.b2028"/>
<dbReference type="CARD" id="ARO:3003577">
    <property type="molecule name" value="ugd"/>
    <property type="mechanism identifier" value="ARO:0001001"/>
    <property type="mechanism name" value="antibiotic target alteration"/>
</dbReference>
<dbReference type="PaxDb" id="511145-b2028"/>
<dbReference type="EnsemblBacteria" id="AAC75089">
    <property type="protein sequence ID" value="AAC75089"/>
    <property type="gene ID" value="b2028"/>
</dbReference>
<dbReference type="GeneID" id="946571"/>
<dbReference type="KEGG" id="ecj:JW2010"/>
<dbReference type="KEGG" id="eco:b2028"/>
<dbReference type="KEGG" id="ecoc:C3026_11430"/>
<dbReference type="PATRIC" id="fig|1411691.4.peg.224"/>
<dbReference type="EchoBASE" id="EB3183"/>
<dbReference type="eggNOG" id="COG1004">
    <property type="taxonomic scope" value="Bacteria"/>
</dbReference>
<dbReference type="InParanoid" id="P76373"/>
<dbReference type="OMA" id="LFMGFTE"/>
<dbReference type="OrthoDB" id="9803238at2"/>
<dbReference type="PhylomeDB" id="P76373"/>
<dbReference type="BioCyc" id="EcoCyc:UGD-MONOMER"/>
<dbReference type="BioCyc" id="MetaCyc:UGD-MONOMER"/>
<dbReference type="SABIO-RK" id="P76373"/>
<dbReference type="UniPathway" id="UPA00030"/>
<dbReference type="UniPathway" id="UPA00038">
    <property type="reaction ID" value="UER00491"/>
</dbReference>
<dbReference type="PRO" id="PR:P76373"/>
<dbReference type="Proteomes" id="UP000000625">
    <property type="component" value="Chromosome"/>
</dbReference>
<dbReference type="GO" id="GO:0051287">
    <property type="term" value="F:NAD binding"/>
    <property type="evidence" value="ECO:0000250"/>
    <property type="project" value="UniProtKB"/>
</dbReference>
<dbReference type="GO" id="GO:0003979">
    <property type="term" value="F:UDP-glucose 6-dehydrogenase activity"/>
    <property type="evidence" value="ECO:0000314"/>
    <property type="project" value="EcoCyc"/>
</dbReference>
<dbReference type="GO" id="GO:0009242">
    <property type="term" value="P:colanic acid biosynthetic process"/>
    <property type="evidence" value="ECO:0000314"/>
    <property type="project" value="EcoCyc"/>
</dbReference>
<dbReference type="GO" id="GO:0009103">
    <property type="term" value="P:lipopolysaccharide biosynthetic process"/>
    <property type="evidence" value="ECO:0007669"/>
    <property type="project" value="UniProtKB-UniPathway"/>
</dbReference>
<dbReference type="GO" id="GO:0006065">
    <property type="term" value="P:UDP-glucuronate biosynthetic process"/>
    <property type="evidence" value="ECO:0007669"/>
    <property type="project" value="UniProtKB-UniPathway"/>
</dbReference>
<dbReference type="FunFam" id="1.10.1040.10:FF:000026">
    <property type="entry name" value="UDP-glucose 6-dehydrogenase"/>
    <property type="match status" value="1"/>
</dbReference>
<dbReference type="FunFam" id="3.40.50.720:FF:000297">
    <property type="entry name" value="UDP-glucose 6-dehydrogenase"/>
    <property type="match status" value="1"/>
</dbReference>
<dbReference type="FunFam" id="3.40.50.720:FF:000400">
    <property type="entry name" value="UDP-glucose 6-dehydrogenase"/>
    <property type="match status" value="1"/>
</dbReference>
<dbReference type="Gene3D" id="1.10.1040.10">
    <property type="entry name" value="N-(1-d-carboxylethyl)-l-norvaline Dehydrogenase, domain 2"/>
    <property type="match status" value="1"/>
</dbReference>
<dbReference type="Gene3D" id="3.40.50.720">
    <property type="entry name" value="NAD(P)-binding Rossmann-like Domain"/>
    <property type="match status" value="2"/>
</dbReference>
<dbReference type="InterPro" id="IPR008927">
    <property type="entry name" value="6-PGluconate_DH-like_C_sf"/>
</dbReference>
<dbReference type="InterPro" id="IPR013328">
    <property type="entry name" value="6PGD_dom2"/>
</dbReference>
<dbReference type="InterPro" id="IPR036291">
    <property type="entry name" value="NAD(P)-bd_dom_sf"/>
</dbReference>
<dbReference type="InterPro" id="IPR017476">
    <property type="entry name" value="UDP-Glc/GDP-Man"/>
</dbReference>
<dbReference type="InterPro" id="IPR014027">
    <property type="entry name" value="UDP-Glc/GDP-Man_DH_C"/>
</dbReference>
<dbReference type="InterPro" id="IPR036220">
    <property type="entry name" value="UDP-Glc/GDP-Man_DH_C_sf"/>
</dbReference>
<dbReference type="InterPro" id="IPR014026">
    <property type="entry name" value="UDP-Glc/GDP-Man_DH_dimer"/>
</dbReference>
<dbReference type="InterPro" id="IPR001732">
    <property type="entry name" value="UDP-Glc/GDP-Man_DH_N"/>
</dbReference>
<dbReference type="InterPro" id="IPR028357">
    <property type="entry name" value="UDPglc_DH_bac"/>
</dbReference>
<dbReference type="NCBIfam" id="TIGR03026">
    <property type="entry name" value="NDP-sugDHase"/>
    <property type="match status" value="1"/>
</dbReference>
<dbReference type="NCBIfam" id="NF011631">
    <property type="entry name" value="PRK15057.1"/>
    <property type="match status" value="1"/>
</dbReference>
<dbReference type="PANTHER" id="PTHR43750:SF2">
    <property type="entry name" value="UDP-GLUCOSE 6-DEHYDROGENASE"/>
    <property type="match status" value="1"/>
</dbReference>
<dbReference type="PANTHER" id="PTHR43750">
    <property type="entry name" value="UDP-GLUCOSE 6-DEHYDROGENASE TUAD"/>
    <property type="match status" value="1"/>
</dbReference>
<dbReference type="Pfam" id="PF00984">
    <property type="entry name" value="UDPG_MGDP_dh"/>
    <property type="match status" value="1"/>
</dbReference>
<dbReference type="Pfam" id="PF03720">
    <property type="entry name" value="UDPG_MGDP_dh_C"/>
    <property type="match status" value="1"/>
</dbReference>
<dbReference type="Pfam" id="PF03721">
    <property type="entry name" value="UDPG_MGDP_dh_N"/>
    <property type="match status" value="1"/>
</dbReference>
<dbReference type="PIRSF" id="PIRSF500134">
    <property type="entry name" value="UDPglc_DH_bac"/>
    <property type="match status" value="1"/>
</dbReference>
<dbReference type="PIRSF" id="PIRSF000124">
    <property type="entry name" value="UDPglc_GDPman_dh"/>
    <property type="match status" value="1"/>
</dbReference>
<dbReference type="SMART" id="SM00984">
    <property type="entry name" value="UDPG_MGDP_dh_C"/>
    <property type="match status" value="1"/>
</dbReference>
<dbReference type="SUPFAM" id="SSF48179">
    <property type="entry name" value="6-phosphogluconate dehydrogenase C-terminal domain-like"/>
    <property type="match status" value="1"/>
</dbReference>
<dbReference type="SUPFAM" id="SSF51735">
    <property type="entry name" value="NAD(P)-binding Rossmann-fold domains"/>
    <property type="match status" value="1"/>
</dbReference>
<dbReference type="SUPFAM" id="SSF52413">
    <property type="entry name" value="UDP-glucose/GDP-mannose dehydrogenase C-terminal domain"/>
    <property type="match status" value="1"/>
</dbReference>
<proteinExistence type="evidence at protein level"/>
<feature type="chain" id="PRO_0000074041" description="UDP-glucose 6-dehydrogenase">
    <location>
        <begin position="1"/>
        <end position="388"/>
    </location>
</feature>
<feature type="active site" description="Nucleophile" evidence="1">
    <location>
        <position position="253"/>
    </location>
</feature>
<feature type="binding site" evidence="1">
    <location>
        <position position="11"/>
    </location>
    <ligand>
        <name>NAD(+)</name>
        <dbReference type="ChEBI" id="CHEBI:57540"/>
    </ligand>
</feature>
<feature type="binding site" evidence="1">
    <location>
        <position position="29"/>
    </location>
    <ligand>
        <name>NAD(+)</name>
        <dbReference type="ChEBI" id="CHEBI:57540"/>
    </ligand>
</feature>
<feature type="binding site" evidence="1">
    <location>
        <position position="83"/>
    </location>
    <ligand>
        <name>NAD(+)</name>
        <dbReference type="ChEBI" id="CHEBI:57540"/>
    </ligand>
</feature>
<feature type="binding site" evidence="1">
    <location>
        <position position="118"/>
    </location>
    <ligand>
        <name>NAD(+)</name>
        <dbReference type="ChEBI" id="CHEBI:57540"/>
    </ligand>
</feature>
<feature type="binding site" evidence="1">
    <location>
        <begin position="141"/>
        <end position="145"/>
    </location>
    <ligand>
        <name>substrate</name>
    </ligand>
</feature>
<feature type="binding site" evidence="1">
    <location>
        <position position="145"/>
    </location>
    <ligand>
        <name>NAD(+)</name>
        <dbReference type="ChEBI" id="CHEBI:57540"/>
    </ligand>
</feature>
<feature type="binding site" evidence="1">
    <location>
        <position position="197"/>
    </location>
    <ligand>
        <name>substrate</name>
    </ligand>
</feature>
<feature type="binding site" evidence="1">
    <location>
        <position position="201"/>
    </location>
    <ligand>
        <name>substrate</name>
    </ligand>
</feature>
<feature type="binding site" evidence="1">
    <location>
        <begin position="242"/>
        <end position="246"/>
    </location>
    <ligand>
        <name>substrate</name>
    </ligand>
</feature>
<feature type="binding site" evidence="1">
    <location>
        <position position="250"/>
    </location>
    <ligand>
        <name>substrate</name>
    </ligand>
</feature>
<feature type="binding site" evidence="1">
    <location>
        <position position="252"/>
    </location>
    <ligand>
        <name>NAD(+)</name>
        <dbReference type="ChEBI" id="CHEBI:57540"/>
    </ligand>
</feature>
<feature type="binding site" evidence="1">
    <location>
        <position position="256"/>
    </location>
    <ligand>
        <name>NAD(+)</name>
        <dbReference type="ChEBI" id="CHEBI:57540"/>
    </ligand>
</feature>
<feature type="binding site" evidence="1">
    <location>
        <position position="307"/>
    </location>
    <ligand>
        <name>substrate</name>
    </ligand>
</feature>
<feature type="binding site" evidence="1">
    <location>
        <position position="314"/>
    </location>
    <ligand>
        <name>NAD(+)</name>
        <dbReference type="ChEBI" id="CHEBI:57540"/>
    </ligand>
</feature>
<evidence type="ECO:0000250" key="1">
    <source>
        <dbReference type="UniProtKB" id="Q0P8H3"/>
    </source>
</evidence>
<evidence type="ECO:0000269" key="2">
    <source>
    </source>
</evidence>
<evidence type="ECO:0000305" key="3"/>
<evidence type="ECO:0000305" key="4">
    <source>
    </source>
</evidence>
<keyword id="KW-0520">NAD</keyword>
<keyword id="KW-0560">Oxidoreductase</keyword>
<keyword id="KW-0597">Phosphoprotein</keyword>
<keyword id="KW-1185">Reference proteome</keyword>
<name>UDG_ECOLI</name>
<sequence length="388" mass="43657">MKITISGTGYVGLSNGLLIAQNHEVVALDILPSRVAMLNDRISPIVDKEIQQFLQSDKIHFNATLDKNEAYRDADYVIIATPTDYDPKTNYFNTSSVESVIKDVVEINPYAVMVIKSTVPVGFTAAMHKKYRTENIIFSPEFLREGKALYDNLHPSRIVIGERSERAERFAALLQEGAIKQNIPMLFTDSTEAEAIKLFANTYLAMRVAYFNELDSYAESLGLNSRQIIEGVCLDPRIGNHYNNPSFGYGGYCLPKDTKQLLANYQSVPNNLISAIVDANRTRKDFIADAILSRKPQVVGIYRLIMKSGSDNFRASSIQGIMKRIKAKGVEVIIYEPVMKEDSFFNSRLERDLATFKQQADVIISNRMAEELKDVADKVYTRDLFGSD</sequence>
<reference key="1">
    <citation type="journal article" date="1996" name="DNA Res.">
        <title>A 460-kb DNA sequence of the Escherichia coli K-12 genome corresponding to the 40.1-50.0 min region on the linkage map.</title>
        <authorList>
            <person name="Itoh T."/>
            <person name="Aiba H."/>
            <person name="Baba T."/>
            <person name="Fujita K."/>
            <person name="Hayashi K."/>
            <person name="Inada T."/>
            <person name="Isono K."/>
            <person name="Kasai H."/>
            <person name="Kimura S."/>
            <person name="Kitakawa M."/>
            <person name="Kitagawa M."/>
            <person name="Makino K."/>
            <person name="Miki T."/>
            <person name="Mizobuchi K."/>
            <person name="Mori H."/>
            <person name="Mori T."/>
            <person name="Motomura K."/>
            <person name="Nakade S."/>
            <person name="Nakamura Y."/>
            <person name="Nashimoto H."/>
            <person name="Nishio Y."/>
            <person name="Oshima T."/>
            <person name="Saito N."/>
            <person name="Sampei G."/>
            <person name="Seki Y."/>
            <person name="Sivasundaram S."/>
            <person name="Tagami H."/>
            <person name="Takeda J."/>
            <person name="Takemoto K."/>
            <person name="Wada C."/>
            <person name="Yamamoto Y."/>
            <person name="Horiuchi T."/>
        </authorList>
    </citation>
    <scope>NUCLEOTIDE SEQUENCE [LARGE SCALE GENOMIC DNA]</scope>
    <source>
        <strain>K12 / W3110 / ATCC 27325 / DSM 5911</strain>
    </source>
</reference>
<reference key="2">
    <citation type="journal article" date="1997" name="Science">
        <title>The complete genome sequence of Escherichia coli K-12.</title>
        <authorList>
            <person name="Blattner F.R."/>
            <person name="Plunkett G. III"/>
            <person name="Bloch C.A."/>
            <person name="Perna N.T."/>
            <person name="Burland V."/>
            <person name="Riley M."/>
            <person name="Collado-Vides J."/>
            <person name="Glasner J.D."/>
            <person name="Rode C.K."/>
            <person name="Mayhew G.F."/>
            <person name="Gregor J."/>
            <person name="Davis N.W."/>
            <person name="Kirkpatrick H.A."/>
            <person name="Goeden M.A."/>
            <person name="Rose D.J."/>
            <person name="Mau B."/>
            <person name="Shao Y."/>
        </authorList>
    </citation>
    <scope>NUCLEOTIDE SEQUENCE [LARGE SCALE GENOMIC DNA]</scope>
    <source>
        <strain>K12 / MG1655 / ATCC 47076</strain>
    </source>
</reference>
<reference key="3">
    <citation type="journal article" date="2006" name="Mol. Syst. Biol.">
        <title>Highly accurate genome sequences of Escherichia coli K-12 strains MG1655 and W3110.</title>
        <authorList>
            <person name="Hayashi K."/>
            <person name="Morooka N."/>
            <person name="Yamamoto Y."/>
            <person name="Fujita K."/>
            <person name="Isono K."/>
            <person name="Choi S."/>
            <person name="Ohtsubo E."/>
            <person name="Baba T."/>
            <person name="Wanner B.L."/>
            <person name="Mori H."/>
            <person name="Horiuchi T."/>
        </authorList>
    </citation>
    <scope>NUCLEOTIDE SEQUENCE [LARGE SCALE GENOMIC DNA]</scope>
    <source>
        <strain>K12 / W3110 / ATCC 27325 / DSM 5911</strain>
    </source>
</reference>
<reference key="4">
    <citation type="journal article" date="2003" name="J. Biol. Chem.">
        <title>Autophosphorylation of the Escherichia coli protein kinase Wzc regulates tyrosine phosphorylation of Ugd, a UDP-glucose dehydrogenase.</title>
        <authorList>
            <person name="Grangeasse C."/>
            <person name="Obadia B."/>
            <person name="Mijakovic I."/>
            <person name="Deutscher J."/>
            <person name="Cozzone A.J."/>
            <person name="Doublet P."/>
        </authorList>
    </citation>
    <scope>PHOSPHORYLATION AT A TYROSINE</scope>
    <scope>CATALYTIC ACTIVITY</scope>
</reference>
<comment type="catalytic activity">
    <reaction evidence="2">
        <text>UDP-alpha-D-glucose + 2 NAD(+) + H2O = UDP-alpha-D-glucuronate + 2 NADH + 3 H(+)</text>
        <dbReference type="Rhea" id="RHEA:23596"/>
        <dbReference type="ChEBI" id="CHEBI:15377"/>
        <dbReference type="ChEBI" id="CHEBI:15378"/>
        <dbReference type="ChEBI" id="CHEBI:57540"/>
        <dbReference type="ChEBI" id="CHEBI:57945"/>
        <dbReference type="ChEBI" id="CHEBI:58052"/>
        <dbReference type="ChEBI" id="CHEBI:58885"/>
        <dbReference type="EC" id="1.1.1.22"/>
    </reaction>
</comment>
<comment type="pathway">
    <text evidence="4">Nucleotide-sugar biosynthesis; UDP-alpha-D-glucuronate biosynthesis; UDP-alpha-D-glucuronate from UDP-alpha-D-glucose: step 1/1.</text>
</comment>
<comment type="pathway">
    <text>Bacterial outer membrane biogenesis; lipopolysaccharide biosynthesis.</text>
</comment>
<comment type="interaction">
    <interactant intactId="EBI-1120497">
        <id>P76373</id>
    </interactant>
    <interactant intactId="EBI-552176">
        <id>P0A8F8</id>
        <label>uvrB</label>
    </interactant>
    <organismsDiffer>false</organismsDiffer>
    <experiments>2</experiments>
</comment>
<comment type="PTM">
    <text evidence="2">Phosphorylated on a tyrosine residue. It results in a significant increase of the dehydrogenase activity.</text>
</comment>
<comment type="similarity">
    <text evidence="3">Belongs to the UDP-glucose/GDP-mannose dehydrogenase family.</text>
</comment>
<protein>
    <recommendedName>
        <fullName>UDP-glucose 6-dehydrogenase</fullName>
        <shortName>UDP-Glc dehydrogenase</shortName>
        <shortName>UDP-GlcDH</shortName>
        <shortName>UDPGDH</shortName>
        <ecNumber evidence="2">1.1.1.22</ecNumber>
    </recommendedName>
</protein>
<accession>P76373</accession>
<organism>
    <name type="scientific">Escherichia coli (strain K12)</name>
    <dbReference type="NCBI Taxonomy" id="83333"/>
    <lineage>
        <taxon>Bacteria</taxon>
        <taxon>Pseudomonadati</taxon>
        <taxon>Pseudomonadota</taxon>
        <taxon>Gammaproteobacteria</taxon>
        <taxon>Enterobacterales</taxon>
        <taxon>Enterobacteriaceae</taxon>
        <taxon>Escherichia</taxon>
    </lineage>
</organism>